<reference key="1">
    <citation type="journal article" date="2010" name="J. Bacteriol.">
        <title>Genome sequence of the deep-rooted Yersinia pestis strain Angola reveals new insights into the evolution and pangenome of the plague bacterium.</title>
        <authorList>
            <person name="Eppinger M."/>
            <person name="Worsham P.L."/>
            <person name="Nikolich M.P."/>
            <person name="Riley D.R."/>
            <person name="Sebastian Y."/>
            <person name="Mou S."/>
            <person name="Achtman M."/>
            <person name="Lindler L.E."/>
            <person name="Ravel J."/>
        </authorList>
    </citation>
    <scope>NUCLEOTIDE SEQUENCE [LARGE SCALE GENOMIC DNA]</scope>
    <source>
        <strain>Angola</strain>
    </source>
</reference>
<proteinExistence type="inferred from homology"/>
<accession>A9R2J6</accession>
<gene>
    <name evidence="1" type="primary">nrdR</name>
    <name type="ordered locus">YpAngola_A3162</name>
</gene>
<protein>
    <recommendedName>
        <fullName evidence="1">Transcriptional repressor NrdR</fullName>
    </recommendedName>
</protein>
<name>NRDR_YERPG</name>
<organism>
    <name type="scientific">Yersinia pestis bv. Antiqua (strain Angola)</name>
    <dbReference type="NCBI Taxonomy" id="349746"/>
    <lineage>
        <taxon>Bacteria</taxon>
        <taxon>Pseudomonadati</taxon>
        <taxon>Pseudomonadota</taxon>
        <taxon>Gammaproteobacteria</taxon>
        <taxon>Enterobacterales</taxon>
        <taxon>Yersiniaceae</taxon>
        <taxon>Yersinia</taxon>
    </lineage>
</organism>
<dbReference type="EMBL" id="CP000901">
    <property type="protein sequence ID" value="ABX86312.1"/>
    <property type="molecule type" value="Genomic_DNA"/>
</dbReference>
<dbReference type="RefSeq" id="WP_002208668.1">
    <property type="nucleotide sequence ID" value="NZ_CP009935.1"/>
</dbReference>
<dbReference type="SMR" id="A9R2J6"/>
<dbReference type="GeneID" id="57975529"/>
<dbReference type="KEGG" id="ypg:YpAngola_A3162"/>
<dbReference type="PATRIC" id="fig|349746.12.peg.4221"/>
<dbReference type="GO" id="GO:0005524">
    <property type="term" value="F:ATP binding"/>
    <property type="evidence" value="ECO:0007669"/>
    <property type="project" value="UniProtKB-KW"/>
</dbReference>
<dbReference type="GO" id="GO:0003677">
    <property type="term" value="F:DNA binding"/>
    <property type="evidence" value="ECO:0007669"/>
    <property type="project" value="UniProtKB-KW"/>
</dbReference>
<dbReference type="GO" id="GO:0008270">
    <property type="term" value="F:zinc ion binding"/>
    <property type="evidence" value="ECO:0007669"/>
    <property type="project" value="UniProtKB-UniRule"/>
</dbReference>
<dbReference type="GO" id="GO:0045892">
    <property type="term" value="P:negative regulation of DNA-templated transcription"/>
    <property type="evidence" value="ECO:0007669"/>
    <property type="project" value="UniProtKB-UniRule"/>
</dbReference>
<dbReference type="HAMAP" id="MF_00440">
    <property type="entry name" value="NrdR"/>
    <property type="match status" value="1"/>
</dbReference>
<dbReference type="InterPro" id="IPR005144">
    <property type="entry name" value="ATP-cone_dom"/>
</dbReference>
<dbReference type="InterPro" id="IPR055173">
    <property type="entry name" value="NrdR-like_N"/>
</dbReference>
<dbReference type="InterPro" id="IPR003796">
    <property type="entry name" value="RNR_NrdR-like"/>
</dbReference>
<dbReference type="NCBIfam" id="TIGR00244">
    <property type="entry name" value="transcriptional regulator NrdR"/>
    <property type="match status" value="1"/>
</dbReference>
<dbReference type="PANTHER" id="PTHR30455">
    <property type="entry name" value="TRANSCRIPTIONAL REPRESSOR NRDR"/>
    <property type="match status" value="1"/>
</dbReference>
<dbReference type="PANTHER" id="PTHR30455:SF2">
    <property type="entry name" value="TRANSCRIPTIONAL REPRESSOR NRDR"/>
    <property type="match status" value="1"/>
</dbReference>
<dbReference type="Pfam" id="PF03477">
    <property type="entry name" value="ATP-cone"/>
    <property type="match status" value="1"/>
</dbReference>
<dbReference type="Pfam" id="PF22811">
    <property type="entry name" value="Zn_ribbon_NrdR"/>
    <property type="match status" value="1"/>
</dbReference>
<dbReference type="PROSITE" id="PS51161">
    <property type="entry name" value="ATP_CONE"/>
    <property type="match status" value="1"/>
</dbReference>
<sequence length="149" mass="17205">MHCPFCAAVDTKVIDSRLVSDGSQVRRRRQCLDCNERFTTFEVAELVLPRVIKSDEVREPFNEEKLRRGMLKALEKRPVSSDDVETAISHIKSQLRATGEREVPTKMVGNLVMEALKRLDKVAYIRFASVYRSFEDVREFGEEIARLQD</sequence>
<keyword id="KW-0067">ATP-binding</keyword>
<keyword id="KW-0238">DNA-binding</keyword>
<keyword id="KW-0479">Metal-binding</keyword>
<keyword id="KW-0547">Nucleotide-binding</keyword>
<keyword id="KW-0678">Repressor</keyword>
<keyword id="KW-0804">Transcription</keyword>
<keyword id="KW-0805">Transcription regulation</keyword>
<keyword id="KW-0862">Zinc</keyword>
<keyword id="KW-0863">Zinc-finger</keyword>
<comment type="function">
    <text evidence="1">Negatively regulates transcription of bacterial ribonucleotide reductase nrd genes and operons by binding to NrdR-boxes.</text>
</comment>
<comment type="cofactor">
    <cofactor evidence="1">
        <name>Zn(2+)</name>
        <dbReference type="ChEBI" id="CHEBI:29105"/>
    </cofactor>
    <text evidence="1">Binds 1 zinc ion.</text>
</comment>
<comment type="similarity">
    <text evidence="1">Belongs to the NrdR family.</text>
</comment>
<feature type="chain" id="PRO_1000124569" description="Transcriptional repressor NrdR">
    <location>
        <begin position="1"/>
        <end position="149"/>
    </location>
</feature>
<feature type="domain" description="ATP-cone" evidence="1">
    <location>
        <begin position="49"/>
        <end position="139"/>
    </location>
</feature>
<feature type="zinc finger region" evidence="1">
    <location>
        <begin position="3"/>
        <end position="34"/>
    </location>
</feature>
<evidence type="ECO:0000255" key="1">
    <source>
        <dbReference type="HAMAP-Rule" id="MF_00440"/>
    </source>
</evidence>